<reference evidence="5" key="1">
    <citation type="journal article" date="2002" name="Nature">
        <title>The genome sequence of Schizosaccharomyces pombe.</title>
        <authorList>
            <person name="Wood V."/>
            <person name="Gwilliam R."/>
            <person name="Rajandream M.A."/>
            <person name="Lyne M.H."/>
            <person name="Lyne R."/>
            <person name="Stewart A."/>
            <person name="Sgouros J.G."/>
            <person name="Peat N."/>
            <person name="Hayles J."/>
            <person name="Baker S.G."/>
            <person name="Basham D."/>
            <person name="Bowman S."/>
            <person name="Brooks K."/>
            <person name="Brown D."/>
            <person name="Brown S."/>
            <person name="Chillingworth T."/>
            <person name="Churcher C.M."/>
            <person name="Collins M."/>
            <person name="Connor R."/>
            <person name="Cronin A."/>
            <person name="Davis P."/>
            <person name="Feltwell T."/>
            <person name="Fraser A."/>
            <person name="Gentles S."/>
            <person name="Goble A."/>
            <person name="Hamlin N."/>
            <person name="Harris D.E."/>
            <person name="Hidalgo J."/>
            <person name="Hodgson G."/>
            <person name="Holroyd S."/>
            <person name="Hornsby T."/>
            <person name="Howarth S."/>
            <person name="Huckle E.J."/>
            <person name="Hunt S."/>
            <person name="Jagels K."/>
            <person name="James K.D."/>
            <person name="Jones L."/>
            <person name="Jones M."/>
            <person name="Leather S."/>
            <person name="McDonald S."/>
            <person name="McLean J."/>
            <person name="Mooney P."/>
            <person name="Moule S."/>
            <person name="Mungall K.L."/>
            <person name="Murphy L.D."/>
            <person name="Niblett D."/>
            <person name="Odell C."/>
            <person name="Oliver K."/>
            <person name="O'Neil S."/>
            <person name="Pearson D."/>
            <person name="Quail M.A."/>
            <person name="Rabbinowitsch E."/>
            <person name="Rutherford K.M."/>
            <person name="Rutter S."/>
            <person name="Saunders D."/>
            <person name="Seeger K."/>
            <person name="Sharp S."/>
            <person name="Skelton J."/>
            <person name="Simmonds M.N."/>
            <person name="Squares R."/>
            <person name="Squares S."/>
            <person name="Stevens K."/>
            <person name="Taylor K."/>
            <person name="Taylor R.G."/>
            <person name="Tivey A."/>
            <person name="Walsh S.V."/>
            <person name="Warren T."/>
            <person name="Whitehead S."/>
            <person name="Woodward J.R."/>
            <person name="Volckaert G."/>
            <person name="Aert R."/>
            <person name="Robben J."/>
            <person name="Grymonprez B."/>
            <person name="Weltjens I."/>
            <person name="Vanstreels E."/>
            <person name="Rieger M."/>
            <person name="Schaefer M."/>
            <person name="Mueller-Auer S."/>
            <person name="Gabel C."/>
            <person name="Fuchs M."/>
            <person name="Duesterhoeft A."/>
            <person name="Fritzc C."/>
            <person name="Holzer E."/>
            <person name="Moestl D."/>
            <person name="Hilbert H."/>
            <person name="Borzym K."/>
            <person name="Langer I."/>
            <person name="Beck A."/>
            <person name="Lehrach H."/>
            <person name="Reinhardt R."/>
            <person name="Pohl T.M."/>
            <person name="Eger P."/>
            <person name="Zimmermann W."/>
            <person name="Wedler H."/>
            <person name="Wambutt R."/>
            <person name="Purnelle B."/>
            <person name="Goffeau A."/>
            <person name="Cadieu E."/>
            <person name="Dreano S."/>
            <person name="Gloux S."/>
            <person name="Lelaure V."/>
            <person name="Mottier S."/>
            <person name="Galibert F."/>
            <person name="Aves S.J."/>
            <person name="Xiang Z."/>
            <person name="Hunt C."/>
            <person name="Moore K."/>
            <person name="Hurst S.M."/>
            <person name="Lucas M."/>
            <person name="Rochet M."/>
            <person name="Gaillardin C."/>
            <person name="Tallada V.A."/>
            <person name="Garzon A."/>
            <person name="Thode G."/>
            <person name="Daga R.R."/>
            <person name="Cruzado L."/>
            <person name="Jimenez J."/>
            <person name="Sanchez M."/>
            <person name="del Rey F."/>
            <person name="Benito J."/>
            <person name="Dominguez A."/>
            <person name="Revuelta J.L."/>
            <person name="Moreno S."/>
            <person name="Armstrong J."/>
            <person name="Forsburg S.L."/>
            <person name="Cerutti L."/>
            <person name="Lowe T."/>
            <person name="McCombie W.R."/>
            <person name="Paulsen I."/>
            <person name="Potashkin J."/>
            <person name="Shpakovski G.V."/>
            <person name="Ussery D."/>
            <person name="Barrell B.G."/>
            <person name="Nurse P."/>
        </authorList>
    </citation>
    <scope>NUCLEOTIDE SEQUENCE [LARGE SCALE GENOMIC DNA]</scope>
    <source>
        <strain>972 / ATCC 24843</strain>
    </source>
</reference>
<reference evidence="4" key="2">
    <citation type="journal article" date="2006" name="Nat. Biotechnol.">
        <title>ORFeome cloning and global analysis of protein localization in the fission yeast Schizosaccharomyces pombe.</title>
        <authorList>
            <person name="Matsuyama A."/>
            <person name="Arai R."/>
            <person name="Yashiroda Y."/>
            <person name="Shirai A."/>
            <person name="Kamata A."/>
            <person name="Sekido S."/>
            <person name="Kobayashi Y."/>
            <person name="Hashimoto A."/>
            <person name="Hamamoto M."/>
            <person name="Hiraoka Y."/>
            <person name="Horinouchi S."/>
            <person name="Yoshida M."/>
        </authorList>
    </citation>
    <scope>SUBCELLULAR LOCATION [LARGE SCALE ANALYSIS]</scope>
</reference>
<feature type="transit peptide" description="Mitochondrion" evidence="2">
    <location>
        <begin position="1"/>
        <end position="15"/>
    </location>
</feature>
<feature type="chain" id="PRO_0000311720" description="Small ribosomal subunit protein uS2m">
    <location>
        <begin position="16"/>
        <end position="263"/>
    </location>
</feature>
<gene>
    <name evidence="5" type="primary">mrp4</name>
    <name type="ORF">SPAC24C9.10c</name>
</gene>
<organism>
    <name type="scientific">Schizosaccharomyces pombe (strain 972 / ATCC 24843)</name>
    <name type="common">Fission yeast</name>
    <dbReference type="NCBI Taxonomy" id="284812"/>
    <lineage>
        <taxon>Eukaryota</taxon>
        <taxon>Fungi</taxon>
        <taxon>Dikarya</taxon>
        <taxon>Ascomycota</taxon>
        <taxon>Taphrinomycotina</taxon>
        <taxon>Schizosaccharomycetes</taxon>
        <taxon>Schizosaccharomycetales</taxon>
        <taxon>Schizosaccharomycetaceae</taxon>
        <taxon>Schizosaccharomyces</taxon>
    </lineage>
</organism>
<protein>
    <recommendedName>
        <fullName evidence="4">Small ribosomal subunit protein uS2m</fullName>
    </recommendedName>
    <alternativeName>
        <fullName>37S ribosomal protein mrp4, mitochondrial</fullName>
    </alternativeName>
</protein>
<evidence type="ECO:0000250" key="1">
    <source>
        <dbReference type="UniProtKB" id="P32902"/>
    </source>
</evidence>
<evidence type="ECO:0000255" key="2"/>
<evidence type="ECO:0000269" key="3">
    <source>
    </source>
</evidence>
<evidence type="ECO:0000305" key="4"/>
<evidence type="ECO:0000312" key="5">
    <source>
        <dbReference type="EMBL" id="CAB11267.1"/>
    </source>
</evidence>
<proteinExistence type="inferred from homology"/>
<keyword id="KW-0496">Mitochondrion</keyword>
<keyword id="KW-1185">Reference proteome</keyword>
<keyword id="KW-0687">Ribonucleoprotein</keyword>
<keyword id="KW-0689">Ribosomal protein</keyword>
<keyword id="KW-0809">Transit peptide</keyword>
<sequence length="263" mass="29311">MLSRKLSPEQLVARRLKIRDWNHKIGAVVAPHYSPTLSIRNPAPPSQLSLPLLLSSGAHLGHSTSIWNPYTQPFIYGKREGIHIISLDQTMVYLRRAISVVRSIAKENGIILFIGTRNGQKDSVVAAAKRARGYHIFDRWLPGLLTNAREVQGKLGGSILCKDNRGKLIQTDKKPSYVFPDLMVILNPLENKSACLEAQKTHVPTIGIIDTDADPRMVTYPIPANDDSLRCTDLIAGLLSRVAEQEYQKANQAFEKDKFTLPL</sequence>
<accession>O13970</accession>
<name>RT04_SCHPO</name>
<dbReference type="EMBL" id="CU329670">
    <property type="protein sequence ID" value="CAB11267.1"/>
    <property type="molecule type" value="Genomic_DNA"/>
</dbReference>
<dbReference type="PIR" id="T38351">
    <property type="entry name" value="T38351"/>
</dbReference>
<dbReference type="RefSeq" id="NP_594035.1">
    <property type="nucleotide sequence ID" value="NM_001019460.2"/>
</dbReference>
<dbReference type="SMR" id="O13970"/>
<dbReference type="BioGRID" id="278066">
    <property type="interactions" value="2"/>
</dbReference>
<dbReference type="ComplexPortal" id="CPX-10315">
    <property type="entry name" value="37S mitochondrial small ribosomal subunit"/>
</dbReference>
<dbReference type="FunCoup" id="O13970">
    <property type="interactions" value="274"/>
</dbReference>
<dbReference type="STRING" id="284812.O13970"/>
<dbReference type="iPTMnet" id="O13970"/>
<dbReference type="PaxDb" id="4896-SPAC24C9.10c.1"/>
<dbReference type="EnsemblFungi" id="SPAC24C9.10c.1">
    <property type="protein sequence ID" value="SPAC24C9.10c.1:pep"/>
    <property type="gene ID" value="SPAC24C9.10c"/>
</dbReference>
<dbReference type="GeneID" id="2541569"/>
<dbReference type="KEGG" id="spo:2541569"/>
<dbReference type="PomBase" id="SPAC24C9.10c">
    <property type="gene designation" value="mrp4"/>
</dbReference>
<dbReference type="VEuPathDB" id="FungiDB:SPAC24C9.10c"/>
<dbReference type="eggNOG" id="KOG0832">
    <property type="taxonomic scope" value="Eukaryota"/>
</dbReference>
<dbReference type="HOGENOM" id="CLU_040318_4_0_1"/>
<dbReference type="InParanoid" id="O13970"/>
<dbReference type="OMA" id="PYIFMEK"/>
<dbReference type="PhylomeDB" id="O13970"/>
<dbReference type="Reactome" id="R-SPO-9837999">
    <property type="pathway name" value="Mitochondrial protein degradation"/>
</dbReference>
<dbReference type="PRO" id="PR:O13970"/>
<dbReference type="Proteomes" id="UP000002485">
    <property type="component" value="Chromosome I"/>
</dbReference>
<dbReference type="GO" id="GO:0005763">
    <property type="term" value="C:mitochondrial small ribosomal subunit"/>
    <property type="evidence" value="ECO:0000318"/>
    <property type="project" value="GO_Central"/>
</dbReference>
<dbReference type="GO" id="GO:0005739">
    <property type="term" value="C:mitochondrion"/>
    <property type="evidence" value="ECO:0007005"/>
    <property type="project" value="PomBase"/>
</dbReference>
<dbReference type="GO" id="GO:0003735">
    <property type="term" value="F:structural constituent of ribosome"/>
    <property type="evidence" value="ECO:0000318"/>
    <property type="project" value="GO_Central"/>
</dbReference>
<dbReference type="GO" id="GO:0000049">
    <property type="term" value="F:tRNA binding"/>
    <property type="evidence" value="ECO:0000250"/>
    <property type="project" value="PomBase"/>
</dbReference>
<dbReference type="GO" id="GO:0032543">
    <property type="term" value="P:mitochondrial translation"/>
    <property type="evidence" value="ECO:0000250"/>
    <property type="project" value="PomBase"/>
</dbReference>
<dbReference type="CDD" id="cd01425">
    <property type="entry name" value="RPS2"/>
    <property type="match status" value="1"/>
</dbReference>
<dbReference type="FunFam" id="3.40.50.10490:FF:000050">
    <property type="entry name" value="Related to MRP4-mitochondrial ribosomal protein, small subunit"/>
    <property type="match status" value="1"/>
</dbReference>
<dbReference type="Gene3D" id="3.40.50.10490">
    <property type="entry name" value="Glucose-6-phosphate isomerase like protein, domain 1"/>
    <property type="match status" value="1"/>
</dbReference>
<dbReference type="HAMAP" id="MF_00291_B">
    <property type="entry name" value="Ribosomal_uS2_B"/>
    <property type="match status" value="1"/>
</dbReference>
<dbReference type="InterPro" id="IPR001865">
    <property type="entry name" value="Ribosomal_uS2"/>
</dbReference>
<dbReference type="InterPro" id="IPR005706">
    <property type="entry name" value="Ribosomal_uS2_bac/mit/plastid"/>
</dbReference>
<dbReference type="InterPro" id="IPR018130">
    <property type="entry name" value="Ribosomal_uS2_CS"/>
</dbReference>
<dbReference type="InterPro" id="IPR023591">
    <property type="entry name" value="Ribosomal_uS2_flav_dom_sf"/>
</dbReference>
<dbReference type="NCBIfam" id="TIGR01011">
    <property type="entry name" value="rpsB_bact"/>
    <property type="match status" value="1"/>
</dbReference>
<dbReference type="PANTHER" id="PTHR12534">
    <property type="entry name" value="30S RIBOSOMAL PROTEIN S2 PROKARYOTIC AND ORGANELLAR"/>
    <property type="match status" value="1"/>
</dbReference>
<dbReference type="PANTHER" id="PTHR12534:SF0">
    <property type="entry name" value="SMALL RIBOSOMAL SUBUNIT PROTEIN US2M"/>
    <property type="match status" value="1"/>
</dbReference>
<dbReference type="Pfam" id="PF00318">
    <property type="entry name" value="Ribosomal_S2"/>
    <property type="match status" value="2"/>
</dbReference>
<dbReference type="PRINTS" id="PR00395">
    <property type="entry name" value="RIBOSOMALS2"/>
</dbReference>
<dbReference type="SUPFAM" id="SSF52313">
    <property type="entry name" value="Ribosomal protein S2"/>
    <property type="match status" value="1"/>
</dbReference>
<dbReference type="PROSITE" id="PS00962">
    <property type="entry name" value="RIBOSOMAL_S2_1"/>
    <property type="match status" value="1"/>
</dbReference>
<comment type="function">
    <text evidence="1">Component of the mitochondrial ribosome (mitoribosome), a dedicated translation machinery responsible for the synthesis of mitochondrial genome-encoded proteins, including at least some of the essential transmembrane subunits of the mitochondrial respiratory chain. The mitoribosomes are attached to the mitochondrial inner membrane and translation products are cotranslationally integrated into the membrane.</text>
</comment>
<comment type="subunit">
    <text evidence="1">Component of the mitochondrial small ribosomal subunit (mt-SSU). Mature yeast 74S mitochondrial ribosomes consist of a small (37S) and a large (54S) subunit. The 37S small subunit contains a 15S ribosomal RNA (15S mt-rRNA) and at least 32 different proteins. The 54S large subunit contains a 21S rRNA (21S mt-rRNA) and at least 45 different proteins.</text>
</comment>
<comment type="subcellular location">
    <subcellularLocation>
        <location evidence="3">Mitochondrion</location>
    </subcellularLocation>
</comment>
<comment type="similarity">
    <text evidence="2">Belongs to the universal ribosomal protein uS2 family.</text>
</comment>